<gene>
    <name evidence="1" type="primary">deoA</name>
    <name type="ordered locus">Sbal_3226</name>
</gene>
<organism>
    <name type="scientific">Shewanella baltica (strain OS155 / ATCC BAA-1091)</name>
    <dbReference type="NCBI Taxonomy" id="325240"/>
    <lineage>
        <taxon>Bacteria</taxon>
        <taxon>Pseudomonadati</taxon>
        <taxon>Pseudomonadota</taxon>
        <taxon>Gammaproteobacteria</taxon>
        <taxon>Alteromonadales</taxon>
        <taxon>Shewanellaceae</taxon>
        <taxon>Shewanella</taxon>
    </lineage>
</organism>
<protein>
    <recommendedName>
        <fullName evidence="1">Thymidine phosphorylase</fullName>
        <ecNumber evidence="1">2.4.2.4</ecNumber>
    </recommendedName>
    <alternativeName>
        <fullName evidence="1">TdRPase</fullName>
    </alternativeName>
</protein>
<dbReference type="EC" id="2.4.2.4" evidence="1"/>
<dbReference type="EMBL" id="CP000563">
    <property type="protein sequence ID" value="ABN62706.1"/>
    <property type="molecule type" value="Genomic_DNA"/>
</dbReference>
<dbReference type="RefSeq" id="WP_011847506.1">
    <property type="nucleotide sequence ID" value="NC_009052.1"/>
</dbReference>
<dbReference type="SMR" id="A3D7J3"/>
<dbReference type="STRING" id="325240.Sbal_3226"/>
<dbReference type="KEGG" id="sbl:Sbal_3226"/>
<dbReference type="HOGENOM" id="CLU_025040_0_1_6"/>
<dbReference type="OrthoDB" id="9763887at2"/>
<dbReference type="UniPathway" id="UPA00578">
    <property type="reaction ID" value="UER00638"/>
</dbReference>
<dbReference type="Proteomes" id="UP000001557">
    <property type="component" value="Chromosome"/>
</dbReference>
<dbReference type="GO" id="GO:0005829">
    <property type="term" value="C:cytosol"/>
    <property type="evidence" value="ECO:0007669"/>
    <property type="project" value="TreeGrafter"/>
</dbReference>
<dbReference type="GO" id="GO:0004645">
    <property type="term" value="F:1,4-alpha-oligoglucan phosphorylase activity"/>
    <property type="evidence" value="ECO:0007669"/>
    <property type="project" value="InterPro"/>
</dbReference>
<dbReference type="GO" id="GO:0009032">
    <property type="term" value="F:thymidine phosphorylase activity"/>
    <property type="evidence" value="ECO:0007669"/>
    <property type="project" value="UniProtKB-UniRule"/>
</dbReference>
<dbReference type="GO" id="GO:0006206">
    <property type="term" value="P:pyrimidine nucleobase metabolic process"/>
    <property type="evidence" value="ECO:0007669"/>
    <property type="project" value="InterPro"/>
</dbReference>
<dbReference type="GO" id="GO:0046104">
    <property type="term" value="P:thymidine metabolic process"/>
    <property type="evidence" value="ECO:0007669"/>
    <property type="project" value="UniProtKB-UniRule"/>
</dbReference>
<dbReference type="FunFam" id="3.40.1030.10:FF:000001">
    <property type="entry name" value="Thymidine phosphorylase"/>
    <property type="match status" value="1"/>
</dbReference>
<dbReference type="FunFam" id="3.90.1170.30:FF:000001">
    <property type="entry name" value="Thymidine phosphorylase"/>
    <property type="match status" value="1"/>
</dbReference>
<dbReference type="Gene3D" id="3.40.1030.10">
    <property type="entry name" value="Nucleoside phosphorylase/phosphoribosyltransferase catalytic domain"/>
    <property type="match status" value="1"/>
</dbReference>
<dbReference type="Gene3D" id="3.90.1170.30">
    <property type="entry name" value="Pyrimidine nucleoside phosphorylase-like, C-terminal domain"/>
    <property type="match status" value="1"/>
</dbReference>
<dbReference type="Gene3D" id="1.20.970.10">
    <property type="entry name" value="Transferase, Pyrimidine Nucleoside Phosphorylase, Chain C"/>
    <property type="match status" value="1"/>
</dbReference>
<dbReference type="HAMAP" id="MF_01628">
    <property type="entry name" value="Thymid_phosp"/>
    <property type="match status" value="1"/>
</dbReference>
<dbReference type="InterPro" id="IPR000312">
    <property type="entry name" value="Glycosyl_Trfase_fam3"/>
</dbReference>
<dbReference type="InterPro" id="IPR017459">
    <property type="entry name" value="Glycosyl_Trfase_fam3_N_dom"/>
</dbReference>
<dbReference type="InterPro" id="IPR036320">
    <property type="entry name" value="Glycosyl_Trfase_fam3_N_dom_sf"/>
</dbReference>
<dbReference type="InterPro" id="IPR035902">
    <property type="entry name" value="Nuc_phospho_transferase"/>
</dbReference>
<dbReference type="InterPro" id="IPR036566">
    <property type="entry name" value="PYNP-like_C_sf"/>
</dbReference>
<dbReference type="InterPro" id="IPR013102">
    <property type="entry name" value="PYNP_C"/>
</dbReference>
<dbReference type="InterPro" id="IPR018090">
    <property type="entry name" value="Pyrmidine_PPas_bac/euk"/>
</dbReference>
<dbReference type="InterPro" id="IPR017872">
    <property type="entry name" value="Pyrmidine_PPase_CS"/>
</dbReference>
<dbReference type="InterPro" id="IPR000053">
    <property type="entry name" value="Thymidine/pyrmidine_PPase"/>
</dbReference>
<dbReference type="InterPro" id="IPR013465">
    <property type="entry name" value="Thymidine_Pase"/>
</dbReference>
<dbReference type="NCBIfam" id="NF004490">
    <property type="entry name" value="PRK05820.1"/>
    <property type="match status" value="1"/>
</dbReference>
<dbReference type="NCBIfam" id="TIGR02643">
    <property type="entry name" value="T_phosphoryl"/>
    <property type="match status" value="1"/>
</dbReference>
<dbReference type="NCBIfam" id="TIGR02644">
    <property type="entry name" value="Y_phosphoryl"/>
    <property type="match status" value="1"/>
</dbReference>
<dbReference type="PANTHER" id="PTHR10515">
    <property type="entry name" value="THYMIDINE PHOSPHORYLASE"/>
    <property type="match status" value="1"/>
</dbReference>
<dbReference type="PANTHER" id="PTHR10515:SF0">
    <property type="entry name" value="THYMIDINE PHOSPHORYLASE"/>
    <property type="match status" value="1"/>
</dbReference>
<dbReference type="Pfam" id="PF02885">
    <property type="entry name" value="Glycos_trans_3N"/>
    <property type="match status" value="1"/>
</dbReference>
<dbReference type="Pfam" id="PF00591">
    <property type="entry name" value="Glycos_transf_3"/>
    <property type="match status" value="1"/>
</dbReference>
<dbReference type="Pfam" id="PF07831">
    <property type="entry name" value="PYNP_C"/>
    <property type="match status" value="1"/>
</dbReference>
<dbReference type="PIRSF" id="PIRSF000478">
    <property type="entry name" value="TP_PyNP"/>
    <property type="match status" value="1"/>
</dbReference>
<dbReference type="SMART" id="SM00941">
    <property type="entry name" value="PYNP_C"/>
    <property type="match status" value="1"/>
</dbReference>
<dbReference type="SUPFAM" id="SSF52418">
    <property type="entry name" value="Nucleoside phosphorylase/phosphoribosyltransferase catalytic domain"/>
    <property type="match status" value="1"/>
</dbReference>
<dbReference type="SUPFAM" id="SSF47648">
    <property type="entry name" value="Nucleoside phosphorylase/phosphoribosyltransferase N-terminal domain"/>
    <property type="match status" value="1"/>
</dbReference>
<dbReference type="SUPFAM" id="SSF54680">
    <property type="entry name" value="Pyrimidine nucleoside phosphorylase C-terminal domain"/>
    <property type="match status" value="1"/>
</dbReference>
<dbReference type="PROSITE" id="PS00647">
    <property type="entry name" value="THYMID_PHOSPHORYLASE"/>
    <property type="match status" value="1"/>
</dbReference>
<comment type="function">
    <text evidence="1">The enzymes which catalyze the reversible phosphorolysis of pyrimidine nucleosides are involved in the degradation of these compounds and in their utilization as carbon and energy sources, or in the rescue of pyrimidine bases for nucleotide synthesis.</text>
</comment>
<comment type="catalytic activity">
    <reaction evidence="1">
        <text>thymidine + phosphate = 2-deoxy-alpha-D-ribose 1-phosphate + thymine</text>
        <dbReference type="Rhea" id="RHEA:16037"/>
        <dbReference type="ChEBI" id="CHEBI:17748"/>
        <dbReference type="ChEBI" id="CHEBI:17821"/>
        <dbReference type="ChEBI" id="CHEBI:43474"/>
        <dbReference type="ChEBI" id="CHEBI:57259"/>
        <dbReference type="EC" id="2.4.2.4"/>
    </reaction>
</comment>
<comment type="pathway">
    <text evidence="1">Pyrimidine metabolism; dTMP biosynthesis via salvage pathway; dTMP from thymine: step 1/2.</text>
</comment>
<comment type="subunit">
    <text evidence="1">Homodimer.</text>
</comment>
<comment type="similarity">
    <text evidence="1">Belongs to the thymidine/pyrimidine-nucleoside phosphorylase family.</text>
</comment>
<sequence length="443" mass="46950">MFLAQEIIRKKRNGLALCSEEIQFFVQGITTNSVSEGQIAALGMAVYFNDMNMDERIALTTAMRDSGTVLNWQSLELNGPVIDKHSTGGVGDVISLMLGPMAAACGGYVPMISGRGLGHTGGTLDKFDAIPGYQTEPSSELFRKVVKEVGVAIIGQTGDLVPADKRFYSIRDNTATVESISLITASILSKKLACNLDALAMDVKVGSGAFMPTYEASEELARSIAAVANGAGTKTTALLTDMNQVLASCAGNAVEVKEAIDFLTGAYRNPRLYEVTMGLCAEMLLLGGLASNEADARAKLNRVLDNGRAAELFGKMVSGLGGPADFVENYSKYLPQSQIIRPVFADMQGYAYSMDTRELGLAVVTLGGGRRKPGDALDYSVGLTQVCALGDKVDSSTPIAVIHAQSEAAFAEAELAVKKAIHIGETAPEKTPEIYAYIRASDL</sequence>
<name>TYPH_SHEB5</name>
<keyword id="KW-0328">Glycosyltransferase</keyword>
<keyword id="KW-1185">Reference proteome</keyword>
<keyword id="KW-0808">Transferase</keyword>
<accession>A3D7J3</accession>
<evidence type="ECO:0000255" key="1">
    <source>
        <dbReference type="HAMAP-Rule" id="MF_01628"/>
    </source>
</evidence>
<reference key="1">
    <citation type="submission" date="2007-02" db="EMBL/GenBank/DDBJ databases">
        <title>Complete sequence of chromosome of Shewanella baltica OS155.</title>
        <authorList>
            <consortium name="US DOE Joint Genome Institute"/>
            <person name="Copeland A."/>
            <person name="Lucas S."/>
            <person name="Lapidus A."/>
            <person name="Barry K."/>
            <person name="Detter J.C."/>
            <person name="Glavina del Rio T."/>
            <person name="Hammon N."/>
            <person name="Israni S."/>
            <person name="Dalin E."/>
            <person name="Tice H."/>
            <person name="Pitluck S."/>
            <person name="Sims D.R."/>
            <person name="Brettin T."/>
            <person name="Bruce D."/>
            <person name="Han C."/>
            <person name="Tapia R."/>
            <person name="Brainard J."/>
            <person name="Schmutz J."/>
            <person name="Larimer F."/>
            <person name="Land M."/>
            <person name="Hauser L."/>
            <person name="Kyrpides N."/>
            <person name="Mikhailova N."/>
            <person name="Brettar I."/>
            <person name="Klappenbach J."/>
            <person name="Konstantinidis K."/>
            <person name="Rodrigues J."/>
            <person name="Tiedje J."/>
            <person name="Richardson P."/>
        </authorList>
    </citation>
    <scope>NUCLEOTIDE SEQUENCE [LARGE SCALE GENOMIC DNA]</scope>
    <source>
        <strain>OS155 / ATCC BAA-1091</strain>
    </source>
</reference>
<feature type="chain" id="PRO_1000069666" description="Thymidine phosphorylase">
    <location>
        <begin position="1"/>
        <end position="443"/>
    </location>
</feature>
<proteinExistence type="inferred from homology"/>